<protein>
    <recommendedName>
        <fullName evidence="4">Secreted acidic protein 1B</fullName>
    </recommendedName>
</protein>
<comment type="subcellular location">
    <subcellularLocation>
        <location evidence="1">Membrane</location>
        <topology evidence="1">Single-pass membrane protein</topology>
    </subcellularLocation>
    <text evidence="1 4">Presence in the organic matrix of the skeleton may be due to shedding of a soluble peptide.</text>
</comment>
<comment type="tissue specificity">
    <text evidence="3">Component of the acid-insoluble and acid-soluble organic matrix of the aragonitic skeleton (at protein level).</text>
</comment>
<reference evidence="5" key="1">
    <citation type="journal article" date="2012" name="Mol. Ecol.">
        <title>Whole transcriptome analysis of the coral Acropora millepora reveals complex responses to CO(2)-driven acidification during the initiation of calcification.</title>
        <authorList>
            <person name="Moya A."/>
            <person name="Huisman L."/>
            <person name="Ball E.E."/>
            <person name="Hayward D.C."/>
            <person name="Grasso L.C."/>
            <person name="Chua C.M."/>
            <person name="Woo H.N."/>
            <person name="Gattuso J.P."/>
            <person name="Foret S."/>
            <person name="Miller D.J."/>
        </authorList>
    </citation>
    <scope>NUCLEOTIDE SEQUENCE [MRNA]</scope>
</reference>
<reference evidence="5" key="2">
    <citation type="journal article" date="2013" name="Mol. Biol. Evol.">
        <title>The skeletal proteome of the coral Acropora millepora: the evolution of calcification by co-option and domain shuffling.</title>
        <authorList>
            <person name="Ramos-Silva P."/>
            <person name="Kaandorp J."/>
            <person name="Huisman L."/>
            <person name="Marie B."/>
            <person name="Zanella-Cleon I."/>
            <person name="Guichard N."/>
            <person name="Miller D.J."/>
            <person name="Marin F."/>
        </authorList>
    </citation>
    <scope>PROTEIN SEQUENCE OF 34-117</scope>
    <scope>TISSUE SPECIFICITY</scope>
    <scope>IDENTIFICATION BY MASS SPECTROMETRY</scope>
</reference>
<dbReference type="EMBL" id="JT006291">
    <property type="status" value="NOT_ANNOTATED_CDS"/>
    <property type="molecule type" value="mRNA"/>
</dbReference>
<dbReference type="EnsemblMetazoa" id="XM_044322637.1">
    <property type="protein sequence ID" value="XP_044178572.1"/>
    <property type="gene ID" value="LOC114976700"/>
</dbReference>
<dbReference type="OrthoDB" id="10539089at2759"/>
<dbReference type="GO" id="GO:0016020">
    <property type="term" value="C:membrane"/>
    <property type="evidence" value="ECO:0007669"/>
    <property type="project" value="UniProtKB-SubCell"/>
</dbReference>
<evidence type="ECO:0000255" key="1"/>
<evidence type="ECO:0000256" key="2">
    <source>
        <dbReference type="SAM" id="MobiDB-lite"/>
    </source>
</evidence>
<evidence type="ECO:0000269" key="3">
    <source>
    </source>
</evidence>
<evidence type="ECO:0000303" key="4">
    <source>
    </source>
</evidence>
<evidence type="ECO:0000305" key="5"/>
<name>SAP1B_ACRMI</name>
<proteinExistence type="evidence at protein level"/>
<sequence length="142" mass="15438">SDDESGDDENGDDKDGDDDDKEEDGEDVSEEDEKADVGDDGDDDDNETGGNSDTNDDVDYGDGNDEAREIGDHSIQDIRDLILDAIHNKDGGEMDADNPLQNLPYGPDKLKELYLRSGGSHFKGQLLNITLGLGFCILFLLL</sequence>
<accession>B3EWZ1</accession>
<organism>
    <name type="scientific">Acropora millepora</name>
    <name type="common">Staghorn coral</name>
    <name type="synonym">Heteropora millepora</name>
    <dbReference type="NCBI Taxonomy" id="45264"/>
    <lineage>
        <taxon>Eukaryota</taxon>
        <taxon>Metazoa</taxon>
        <taxon>Cnidaria</taxon>
        <taxon>Anthozoa</taxon>
        <taxon>Hexacorallia</taxon>
        <taxon>Scleractinia</taxon>
        <taxon>Astrocoeniina</taxon>
        <taxon>Acroporidae</taxon>
        <taxon>Acropora</taxon>
    </lineage>
</organism>
<keyword id="KW-0903">Direct protein sequencing</keyword>
<keyword id="KW-0472">Membrane</keyword>
<keyword id="KW-0812">Transmembrane</keyword>
<keyword id="KW-1133">Transmembrane helix</keyword>
<feature type="chain" id="PRO_0000429558" description="Secreted acidic protein 1B">
    <location>
        <begin position="1" status="less than"/>
        <end position="142"/>
    </location>
</feature>
<feature type="topological domain" description="Extracellular" evidence="1">
    <location>
        <begin position="1" status="less than"/>
        <end position="123"/>
    </location>
</feature>
<feature type="transmembrane region" description="Helical" evidence="1">
    <location>
        <begin position="124"/>
        <end position="141"/>
    </location>
</feature>
<feature type="topological domain" description="Cytoplasmic" evidence="1">
    <location>
        <position position="142"/>
    </location>
</feature>
<feature type="region of interest" description="Disordered" evidence="2">
    <location>
        <begin position="1"/>
        <end position="74"/>
    </location>
</feature>
<feature type="compositionally biased region" description="Acidic residues" evidence="2">
    <location>
        <begin position="1"/>
        <end position="47"/>
    </location>
</feature>
<feature type="compositionally biased region" description="Acidic residues" evidence="2">
    <location>
        <begin position="54"/>
        <end position="64"/>
    </location>
</feature>
<feature type="compositionally biased region" description="Basic and acidic residues" evidence="2">
    <location>
        <begin position="65"/>
        <end position="74"/>
    </location>
</feature>
<feature type="non-terminal residue" evidence="5">
    <location>
        <position position="1"/>
    </location>
</feature>